<gene>
    <name evidence="1" type="primary">groES</name>
    <name evidence="1" type="synonym">groS</name>
    <name type="ordered locus">THEYE_A0606</name>
</gene>
<protein>
    <recommendedName>
        <fullName evidence="1">Co-chaperonin GroES</fullName>
    </recommendedName>
    <alternativeName>
        <fullName evidence="1">10 kDa chaperonin</fullName>
    </alternativeName>
    <alternativeName>
        <fullName evidence="1">Chaperonin-10</fullName>
        <shortName evidence="1">Cpn10</shortName>
    </alternativeName>
</protein>
<proteinExistence type="inferred from homology"/>
<keyword id="KW-0143">Chaperone</keyword>
<keyword id="KW-0963">Cytoplasm</keyword>
<keyword id="KW-1185">Reference proteome</keyword>
<evidence type="ECO:0000255" key="1">
    <source>
        <dbReference type="HAMAP-Rule" id="MF_00580"/>
    </source>
</evidence>
<dbReference type="EMBL" id="CP001147">
    <property type="protein sequence ID" value="ACI22172.1"/>
    <property type="molecule type" value="Genomic_DNA"/>
</dbReference>
<dbReference type="RefSeq" id="WP_012546861.1">
    <property type="nucleotide sequence ID" value="NC_011296.1"/>
</dbReference>
<dbReference type="RefSeq" id="YP_002248449.1">
    <property type="nucleotide sequence ID" value="NC_011296.1"/>
</dbReference>
<dbReference type="SMR" id="B5YJN4"/>
<dbReference type="FunCoup" id="B5YJN4">
    <property type="interactions" value="440"/>
</dbReference>
<dbReference type="STRING" id="289376.THEYE_A0606"/>
<dbReference type="EnsemblBacteria" id="ACI22172">
    <property type="protein sequence ID" value="ACI22172"/>
    <property type="gene ID" value="THEYE_A0606"/>
</dbReference>
<dbReference type="KEGG" id="tye:THEYE_A0606"/>
<dbReference type="PATRIC" id="fig|289376.4.peg.600"/>
<dbReference type="eggNOG" id="COG0234">
    <property type="taxonomic scope" value="Bacteria"/>
</dbReference>
<dbReference type="HOGENOM" id="CLU_132825_2_0_0"/>
<dbReference type="InParanoid" id="B5YJN4"/>
<dbReference type="OrthoDB" id="9806791at2"/>
<dbReference type="Proteomes" id="UP000000718">
    <property type="component" value="Chromosome"/>
</dbReference>
<dbReference type="GO" id="GO:0005737">
    <property type="term" value="C:cytoplasm"/>
    <property type="evidence" value="ECO:0007669"/>
    <property type="project" value="UniProtKB-SubCell"/>
</dbReference>
<dbReference type="GO" id="GO:0005524">
    <property type="term" value="F:ATP binding"/>
    <property type="evidence" value="ECO:0007669"/>
    <property type="project" value="InterPro"/>
</dbReference>
<dbReference type="GO" id="GO:0046872">
    <property type="term" value="F:metal ion binding"/>
    <property type="evidence" value="ECO:0000318"/>
    <property type="project" value="GO_Central"/>
</dbReference>
<dbReference type="GO" id="GO:0044183">
    <property type="term" value="F:protein folding chaperone"/>
    <property type="evidence" value="ECO:0007669"/>
    <property type="project" value="InterPro"/>
</dbReference>
<dbReference type="GO" id="GO:0051087">
    <property type="term" value="F:protein-folding chaperone binding"/>
    <property type="evidence" value="ECO:0000318"/>
    <property type="project" value="GO_Central"/>
</dbReference>
<dbReference type="GO" id="GO:0051082">
    <property type="term" value="F:unfolded protein binding"/>
    <property type="evidence" value="ECO:0000318"/>
    <property type="project" value="GO_Central"/>
</dbReference>
<dbReference type="GO" id="GO:0051085">
    <property type="term" value="P:chaperone cofactor-dependent protein refolding"/>
    <property type="evidence" value="ECO:0000318"/>
    <property type="project" value="GO_Central"/>
</dbReference>
<dbReference type="CDD" id="cd00320">
    <property type="entry name" value="cpn10"/>
    <property type="match status" value="1"/>
</dbReference>
<dbReference type="FunFam" id="2.30.33.40:FF:000004">
    <property type="entry name" value="10 kDa chaperonin"/>
    <property type="match status" value="1"/>
</dbReference>
<dbReference type="Gene3D" id="2.30.33.40">
    <property type="entry name" value="GroES chaperonin"/>
    <property type="match status" value="1"/>
</dbReference>
<dbReference type="HAMAP" id="MF_00580">
    <property type="entry name" value="CH10"/>
    <property type="match status" value="1"/>
</dbReference>
<dbReference type="InterPro" id="IPR020818">
    <property type="entry name" value="Chaperonin_GroES"/>
</dbReference>
<dbReference type="InterPro" id="IPR037124">
    <property type="entry name" value="Chaperonin_GroES_sf"/>
</dbReference>
<dbReference type="InterPro" id="IPR011032">
    <property type="entry name" value="GroES-like_sf"/>
</dbReference>
<dbReference type="NCBIfam" id="NF001531">
    <property type="entry name" value="PRK00364.2-2"/>
    <property type="match status" value="1"/>
</dbReference>
<dbReference type="PANTHER" id="PTHR10772">
    <property type="entry name" value="10 KDA HEAT SHOCK PROTEIN"/>
    <property type="match status" value="1"/>
</dbReference>
<dbReference type="PANTHER" id="PTHR10772:SF58">
    <property type="entry name" value="CO-CHAPERONIN GROES"/>
    <property type="match status" value="1"/>
</dbReference>
<dbReference type="Pfam" id="PF00166">
    <property type="entry name" value="Cpn10"/>
    <property type="match status" value="1"/>
</dbReference>
<dbReference type="PRINTS" id="PR00297">
    <property type="entry name" value="CHAPERONIN10"/>
</dbReference>
<dbReference type="SMART" id="SM00883">
    <property type="entry name" value="Cpn10"/>
    <property type="match status" value="1"/>
</dbReference>
<dbReference type="SUPFAM" id="SSF50129">
    <property type="entry name" value="GroES-like"/>
    <property type="match status" value="1"/>
</dbReference>
<feature type="chain" id="PRO_1000129721" description="Co-chaperonin GroES">
    <location>
        <begin position="1"/>
        <end position="88"/>
    </location>
</feature>
<name>CH10_THEYD</name>
<comment type="function">
    <text evidence="1">Together with the chaperonin GroEL, plays an essential role in assisting protein folding. The GroEL-GroES system forms a nano-cage that allows encapsulation of the non-native substrate proteins and provides a physical environment optimized to promote and accelerate protein folding. GroES binds to the apical surface of the GroEL ring, thereby capping the opening of the GroEL channel.</text>
</comment>
<comment type="subunit">
    <text evidence="1">Heptamer of 7 subunits arranged in a ring. Interacts with the chaperonin GroEL.</text>
</comment>
<comment type="subcellular location">
    <subcellularLocation>
        <location evidence="1">Cytoplasm</location>
    </subcellularLocation>
</comment>
<comment type="similarity">
    <text evidence="1">Belongs to the GroES chaperonin family.</text>
</comment>
<organism>
    <name type="scientific">Thermodesulfovibrio yellowstonii (strain ATCC 51303 / DSM 11347 / YP87)</name>
    <dbReference type="NCBI Taxonomy" id="289376"/>
    <lineage>
        <taxon>Bacteria</taxon>
        <taxon>Pseudomonadati</taxon>
        <taxon>Nitrospirota</taxon>
        <taxon>Thermodesulfovibrionia</taxon>
        <taxon>Thermodesulfovibrionales</taxon>
        <taxon>Thermodesulfovibrionaceae</taxon>
        <taxon>Thermodesulfovibrio</taxon>
    </lineage>
</organism>
<sequence length="88" mass="9820">MKIKPLKDRVVVKFSSEELEKTPGGIYVPDVAKEKPQKGTVVEIGSEVKEVKVGDTVLFDKYAGSKIKVDDVEYLIIKEEEILGIVEK</sequence>
<reference key="1">
    <citation type="submission" date="2008-08" db="EMBL/GenBank/DDBJ databases">
        <title>The complete genome sequence of Thermodesulfovibrio yellowstonii strain ATCC 51303 / DSM 11347 / YP87.</title>
        <authorList>
            <person name="Dodson R.J."/>
            <person name="Durkin A.S."/>
            <person name="Wu M."/>
            <person name="Eisen J."/>
            <person name="Sutton G."/>
        </authorList>
    </citation>
    <scope>NUCLEOTIDE SEQUENCE [LARGE SCALE GENOMIC DNA]</scope>
    <source>
        <strain>ATCC 51303 / DSM 11347 / YP87</strain>
    </source>
</reference>
<accession>B5YJN4</accession>